<name>URM1_BOVIN</name>
<proteinExistence type="inferred from homology"/>
<gene>
    <name evidence="1" type="primary">URM1</name>
</gene>
<feature type="chain" id="PRO_0000249779" description="Ubiquitin-related modifier 1">
    <location>
        <begin position="1"/>
        <end position="101"/>
    </location>
</feature>
<feature type="modified residue" description="1-thioglycine" evidence="1">
    <location>
        <position position="101"/>
    </location>
</feature>
<feature type="cross-link" description="Glycyl lysine isopeptide (Gly-Lys) (interchain with K-? in acceptor proteins)" evidence="1">
    <location>
        <position position="101"/>
    </location>
</feature>
<dbReference type="EMBL" id="BC118391">
    <property type="protein sequence ID" value="AAI18392.1"/>
    <property type="molecule type" value="mRNA"/>
</dbReference>
<dbReference type="RefSeq" id="NP_001069197.1">
    <property type="nucleotide sequence ID" value="NM_001075729.3"/>
</dbReference>
<dbReference type="RefSeq" id="NP_001178049.1">
    <property type="nucleotide sequence ID" value="NM_001191120.1"/>
</dbReference>
<dbReference type="SMR" id="Q148F0"/>
<dbReference type="FunCoup" id="Q148F0">
    <property type="interactions" value="3631"/>
</dbReference>
<dbReference type="STRING" id="9913.ENSBTAP00000062696"/>
<dbReference type="PaxDb" id="9913-ENSBTAP00000035991"/>
<dbReference type="GeneID" id="515890"/>
<dbReference type="KEGG" id="bta:515890"/>
<dbReference type="CTD" id="81605"/>
<dbReference type="VEuPathDB" id="HostDB:ENSBTAG00000025612"/>
<dbReference type="eggNOG" id="KOG4146">
    <property type="taxonomic scope" value="Eukaryota"/>
</dbReference>
<dbReference type="HOGENOM" id="CLU_148208_0_1_1"/>
<dbReference type="InParanoid" id="Q148F0"/>
<dbReference type="OMA" id="DYELQPN"/>
<dbReference type="OrthoDB" id="10248987at2759"/>
<dbReference type="TreeFam" id="TF336363"/>
<dbReference type="UniPathway" id="UPA00988"/>
<dbReference type="Proteomes" id="UP000009136">
    <property type="component" value="Chromosome 11"/>
</dbReference>
<dbReference type="Bgee" id="ENSBTAG00000025612">
    <property type="expression patterns" value="Expressed in theca cell and 104 other cell types or tissues"/>
</dbReference>
<dbReference type="GO" id="GO:0005829">
    <property type="term" value="C:cytosol"/>
    <property type="evidence" value="ECO:0007669"/>
    <property type="project" value="UniProtKB-UniRule"/>
</dbReference>
<dbReference type="GO" id="GO:0005634">
    <property type="term" value="C:nucleus"/>
    <property type="evidence" value="ECO:0000318"/>
    <property type="project" value="GO_Central"/>
</dbReference>
<dbReference type="GO" id="GO:0031386">
    <property type="term" value="F:protein tag activity"/>
    <property type="evidence" value="ECO:0000318"/>
    <property type="project" value="GO_Central"/>
</dbReference>
<dbReference type="GO" id="GO:0032447">
    <property type="term" value="P:protein urmylation"/>
    <property type="evidence" value="ECO:0000318"/>
    <property type="project" value="GO_Central"/>
</dbReference>
<dbReference type="GO" id="GO:0034227">
    <property type="term" value="P:tRNA thio-modification"/>
    <property type="evidence" value="ECO:0000250"/>
    <property type="project" value="UniProtKB"/>
</dbReference>
<dbReference type="GO" id="GO:0002098">
    <property type="term" value="P:tRNA wobble uridine modification"/>
    <property type="evidence" value="ECO:0000250"/>
    <property type="project" value="UniProtKB"/>
</dbReference>
<dbReference type="CDD" id="cd01764">
    <property type="entry name" value="Ubl_Urm1"/>
    <property type="match status" value="1"/>
</dbReference>
<dbReference type="FunFam" id="3.10.20.30:FF:000021">
    <property type="entry name" value="Ubiquitin-related modifier 1"/>
    <property type="match status" value="1"/>
</dbReference>
<dbReference type="Gene3D" id="3.10.20.30">
    <property type="match status" value="1"/>
</dbReference>
<dbReference type="HAMAP" id="MF_03048">
    <property type="entry name" value="Urm1"/>
    <property type="match status" value="1"/>
</dbReference>
<dbReference type="InterPro" id="IPR012675">
    <property type="entry name" value="Beta-grasp_dom_sf"/>
</dbReference>
<dbReference type="InterPro" id="IPR016155">
    <property type="entry name" value="Mopterin_synth/thiamin_S_b"/>
</dbReference>
<dbReference type="InterPro" id="IPR015221">
    <property type="entry name" value="Urm1"/>
</dbReference>
<dbReference type="PANTHER" id="PTHR14986">
    <property type="entry name" value="RURM1 PROTEIN"/>
    <property type="match status" value="1"/>
</dbReference>
<dbReference type="Pfam" id="PF09138">
    <property type="entry name" value="Urm1"/>
    <property type="match status" value="1"/>
</dbReference>
<dbReference type="PIRSF" id="PIRSF037379">
    <property type="entry name" value="Ubiquitin-related_modifier_1"/>
    <property type="match status" value="1"/>
</dbReference>
<dbReference type="SUPFAM" id="SSF54285">
    <property type="entry name" value="MoaD/ThiS"/>
    <property type="match status" value="1"/>
</dbReference>
<protein>
    <recommendedName>
        <fullName evidence="1">Ubiquitin-related modifier 1</fullName>
    </recommendedName>
</protein>
<reference key="1">
    <citation type="submission" date="2006-06" db="EMBL/GenBank/DDBJ databases">
        <authorList>
            <consortium name="NIH - Mammalian Gene Collection (MGC) project"/>
        </authorList>
    </citation>
    <scope>NUCLEOTIDE SEQUENCE [LARGE SCALE MRNA]</scope>
    <source>
        <strain>Hereford</strain>
        <tissue>Fetal cerebellum</tissue>
    </source>
</reference>
<organism>
    <name type="scientific">Bos taurus</name>
    <name type="common">Bovine</name>
    <dbReference type="NCBI Taxonomy" id="9913"/>
    <lineage>
        <taxon>Eukaryota</taxon>
        <taxon>Metazoa</taxon>
        <taxon>Chordata</taxon>
        <taxon>Craniata</taxon>
        <taxon>Vertebrata</taxon>
        <taxon>Euteleostomi</taxon>
        <taxon>Mammalia</taxon>
        <taxon>Eutheria</taxon>
        <taxon>Laurasiatheria</taxon>
        <taxon>Artiodactyla</taxon>
        <taxon>Ruminantia</taxon>
        <taxon>Pecora</taxon>
        <taxon>Bovidae</taxon>
        <taxon>Bovinae</taxon>
        <taxon>Bos</taxon>
    </lineage>
</organism>
<keyword id="KW-0963">Cytoplasm</keyword>
<keyword id="KW-1017">Isopeptide bond</keyword>
<keyword id="KW-1185">Reference proteome</keyword>
<keyword id="KW-0819">tRNA processing</keyword>
<keyword id="KW-0833">Ubl conjugation pathway</keyword>
<comment type="function">
    <text evidence="1">Acts as a sulfur carrier required for 2-thiolation of mcm(5)S(2)U at tRNA wobble positions of cytosolic tRNA(Lys), tRNA(Glu) and tRNA(Gln). Serves as sulfur donor in tRNA 2-thiolation reaction by being thiocarboxylated (-COSH) at its C-terminus by MOCS3. The sulfur is then transferred to tRNA to form 2-thiolation of mcm(5)S(2)U. Also acts as a ubiquitin-like protein (UBL) that is covalently conjugated via an isopeptide bond to lysine residues of target proteins such as MOCS3, ATPBD3, CTU2, USP15 and CAS. The thiocarboxylated form serves as substrate for conjugation and oxidative stress specifically induces the formation of UBL-protein conjugates.</text>
</comment>
<comment type="pathway">
    <text evidence="1">tRNA modification; 5-methoxycarbonylmethyl-2-thiouridine-tRNA biosynthesis.</text>
</comment>
<comment type="subunit">
    <text evidence="1">Component of a complex at least composed of URM1, CTU2/NCS2 and CTU1/ATPBD3.</text>
</comment>
<comment type="subcellular location">
    <subcellularLocation>
        <location evidence="1">Cytoplasm</location>
    </subcellularLocation>
</comment>
<comment type="PTM">
    <text evidence="1">C-terminal thiocarboxylation occurs in 2 steps, it is first acyl-adenylated (-COAMP) via the hesA/moeB/thiF part of MOCS3, then thiocarboxylated (-COSH) via the rhodanese domain of MOCS3.</text>
</comment>
<comment type="similarity">
    <text evidence="1">Belongs to the URM1 family.</text>
</comment>
<sequence length="101" mass="11283">MAAPLSVEVEFGGGAELLFDGVKKHQVTLPGQEEPWDIRSLLVWIKKNLLKERPELFIQGDSVRPGILVLVNDADWELLGELDYQLQDQDSVLFISTLHGG</sequence>
<evidence type="ECO:0000255" key="1">
    <source>
        <dbReference type="HAMAP-Rule" id="MF_03048"/>
    </source>
</evidence>
<accession>Q148F0</accession>